<evidence type="ECO:0000255" key="1">
    <source>
        <dbReference type="HAMAP-Rule" id="MF_00436"/>
    </source>
</evidence>
<evidence type="ECO:0000255" key="2">
    <source>
        <dbReference type="PROSITE-ProRule" id="PRU01346"/>
    </source>
</evidence>
<evidence type="ECO:0000256" key="3">
    <source>
        <dbReference type="SAM" id="MobiDB-lite"/>
    </source>
</evidence>
<organism>
    <name type="scientific">Pseudomonas putida (strain W619)</name>
    <dbReference type="NCBI Taxonomy" id="390235"/>
    <lineage>
        <taxon>Bacteria</taxon>
        <taxon>Pseudomonadati</taxon>
        <taxon>Pseudomonadota</taxon>
        <taxon>Gammaproteobacteria</taxon>
        <taxon>Pseudomonadales</taxon>
        <taxon>Pseudomonadaceae</taxon>
        <taxon>Pseudomonas</taxon>
    </lineage>
</organism>
<comment type="function">
    <text evidence="1">RNA chaperone that binds small regulatory RNA (sRNAs) and mRNAs to facilitate mRNA translational regulation in response to envelope stress, environmental stress and changes in metabolite concentrations. Also binds with high specificity to tRNAs.</text>
</comment>
<comment type="subunit">
    <text evidence="1">Homohexamer.</text>
</comment>
<comment type="similarity">
    <text evidence="1">Belongs to the Hfq family.</text>
</comment>
<protein>
    <recommendedName>
        <fullName evidence="1">RNA-binding protein Hfq</fullName>
    </recommendedName>
</protein>
<proteinExistence type="inferred from homology"/>
<sequence length="86" mass="9448">MSKGHSLQDPYLNTLRKEKVPVSIYLVNGIKLQGSIESFDQFVVLLKNTVSQMVYKHAISTVVPARPVRLPSPSDSEHGDSEPGNA</sequence>
<keyword id="KW-0694">RNA-binding</keyword>
<keyword id="KW-0346">Stress response</keyword>
<gene>
    <name evidence="1" type="primary">hfq</name>
    <name type="ordered locus">PputW619_4685</name>
</gene>
<feature type="chain" id="PRO_1000190345" description="RNA-binding protein Hfq">
    <location>
        <begin position="1"/>
        <end position="86"/>
    </location>
</feature>
<feature type="domain" description="Sm" evidence="2">
    <location>
        <begin position="9"/>
        <end position="68"/>
    </location>
</feature>
<feature type="region of interest" description="Disordered" evidence="3">
    <location>
        <begin position="66"/>
        <end position="86"/>
    </location>
</feature>
<feature type="compositionally biased region" description="Basic and acidic residues" evidence="3">
    <location>
        <begin position="75"/>
        <end position="86"/>
    </location>
</feature>
<dbReference type="EMBL" id="CP000949">
    <property type="protein sequence ID" value="ACA75162.1"/>
    <property type="molecule type" value="Genomic_DNA"/>
</dbReference>
<dbReference type="SMR" id="B1JAD4"/>
<dbReference type="STRING" id="390235.PputW619_4685"/>
<dbReference type="KEGG" id="ppw:PputW619_4685"/>
<dbReference type="eggNOG" id="COG1923">
    <property type="taxonomic scope" value="Bacteria"/>
</dbReference>
<dbReference type="HOGENOM" id="CLU_113688_2_2_6"/>
<dbReference type="OrthoDB" id="9799751at2"/>
<dbReference type="GO" id="GO:0005829">
    <property type="term" value="C:cytosol"/>
    <property type="evidence" value="ECO:0007669"/>
    <property type="project" value="TreeGrafter"/>
</dbReference>
<dbReference type="GO" id="GO:0003723">
    <property type="term" value="F:RNA binding"/>
    <property type="evidence" value="ECO:0007669"/>
    <property type="project" value="UniProtKB-UniRule"/>
</dbReference>
<dbReference type="GO" id="GO:0006355">
    <property type="term" value="P:regulation of DNA-templated transcription"/>
    <property type="evidence" value="ECO:0007669"/>
    <property type="project" value="InterPro"/>
</dbReference>
<dbReference type="GO" id="GO:0043487">
    <property type="term" value="P:regulation of RNA stability"/>
    <property type="evidence" value="ECO:0007669"/>
    <property type="project" value="TreeGrafter"/>
</dbReference>
<dbReference type="GO" id="GO:0045974">
    <property type="term" value="P:regulation of translation, ncRNA-mediated"/>
    <property type="evidence" value="ECO:0007669"/>
    <property type="project" value="TreeGrafter"/>
</dbReference>
<dbReference type="CDD" id="cd01716">
    <property type="entry name" value="Hfq"/>
    <property type="match status" value="1"/>
</dbReference>
<dbReference type="FunFam" id="2.30.30.100:FF:000001">
    <property type="entry name" value="RNA-binding protein Hfq"/>
    <property type="match status" value="1"/>
</dbReference>
<dbReference type="Gene3D" id="2.30.30.100">
    <property type="match status" value="1"/>
</dbReference>
<dbReference type="HAMAP" id="MF_00436">
    <property type="entry name" value="Hfq"/>
    <property type="match status" value="1"/>
</dbReference>
<dbReference type="InterPro" id="IPR005001">
    <property type="entry name" value="Hfq"/>
</dbReference>
<dbReference type="InterPro" id="IPR010920">
    <property type="entry name" value="LSM_dom_sf"/>
</dbReference>
<dbReference type="InterPro" id="IPR047575">
    <property type="entry name" value="Sm"/>
</dbReference>
<dbReference type="NCBIfam" id="TIGR02383">
    <property type="entry name" value="Hfq"/>
    <property type="match status" value="1"/>
</dbReference>
<dbReference type="NCBIfam" id="NF001602">
    <property type="entry name" value="PRK00395.1"/>
    <property type="match status" value="1"/>
</dbReference>
<dbReference type="PANTHER" id="PTHR34772">
    <property type="entry name" value="RNA-BINDING PROTEIN HFQ"/>
    <property type="match status" value="1"/>
</dbReference>
<dbReference type="PANTHER" id="PTHR34772:SF1">
    <property type="entry name" value="RNA-BINDING PROTEIN HFQ"/>
    <property type="match status" value="1"/>
</dbReference>
<dbReference type="Pfam" id="PF17209">
    <property type="entry name" value="Hfq"/>
    <property type="match status" value="1"/>
</dbReference>
<dbReference type="SUPFAM" id="SSF50182">
    <property type="entry name" value="Sm-like ribonucleoproteins"/>
    <property type="match status" value="1"/>
</dbReference>
<dbReference type="PROSITE" id="PS52002">
    <property type="entry name" value="SM"/>
    <property type="match status" value="1"/>
</dbReference>
<accession>B1JAD4</accession>
<reference key="1">
    <citation type="submission" date="2008-02" db="EMBL/GenBank/DDBJ databases">
        <title>Complete sequence of Pseudomonas putida W619.</title>
        <authorList>
            <person name="Copeland A."/>
            <person name="Lucas S."/>
            <person name="Lapidus A."/>
            <person name="Barry K."/>
            <person name="Detter J.C."/>
            <person name="Glavina del Rio T."/>
            <person name="Dalin E."/>
            <person name="Tice H."/>
            <person name="Pitluck S."/>
            <person name="Chain P."/>
            <person name="Malfatti S."/>
            <person name="Shin M."/>
            <person name="Vergez L."/>
            <person name="Schmutz J."/>
            <person name="Larimer F."/>
            <person name="Land M."/>
            <person name="Hauser L."/>
            <person name="Kyrpides N."/>
            <person name="Kim E."/>
            <person name="Taghavi S."/>
            <person name="Vangronsveld D."/>
            <person name="van der Lelie D."/>
            <person name="Richardson P."/>
        </authorList>
    </citation>
    <scope>NUCLEOTIDE SEQUENCE [LARGE SCALE GENOMIC DNA]</scope>
    <source>
        <strain>W619</strain>
    </source>
</reference>
<name>HFQ_PSEPW</name>